<comment type="function">
    <text evidence="1">Catalyzes the NADPH-dependent reduction of N-acetyl-5-glutamyl phosphate to yield N-acetyl-L-glutamate 5-semialdehyde.</text>
</comment>
<comment type="catalytic activity">
    <reaction evidence="1">
        <text>N-acetyl-L-glutamate 5-semialdehyde + phosphate + NADP(+) = N-acetyl-L-glutamyl 5-phosphate + NADPH + H(+)</text>
        <dbReference type="Rhea" id="RHEA:21588"/>
        <dbReference type="ChEBI" id="CHEBI:15378"/>
        <dbReference type="ChEBI" id="CHEBI:29123"/>
        <dbReference type="ChEBI" id="CHEBI:43474"/>
        <dbReference type="ChEBI" id="CHEBI:57783"/>
        <dbReference type="ChEBI" id="CHEBI:57936"/>
        <dbReference type="ChEBI" id="CHEBI:58349"/>
        <dbReference type="EC" id="1.2.1.38"/>
    </reaction>
</comment>
<comment type="pathway">
    <text evidence="1">Amino-acid biosynthesis; L-arginine biosynthesis; N(2)-acetyl-L-ornithine from L-glutamate: step 3/4.</text>
</comment>
<comment type="subcellular location">
    <subcellularLocation>
        <location evidence="1">Cytoplasm</location>
    </subcellularLocation>
</comment>
<comment type="similarity">
    <text evidence="1">Belongs to the NAGSA dehydrogenase family. Type 1 subfamily.</text>
</comment>
<proteinExistence type="inferred from homology"/>
<keyword id="KW-0028">Amino-acid biosynthesis</keyword>
<keyword id="KW-0055">Arginine biosynthesis</keyword>
<keyword id="KW-0963">Cytoplasm</keyword>
<keyword id="KW-0521">NADP</keyword>
<keyword id="KW-0560">Oxidoreductase</keyword>
<keyword id="KW-1185">Reference proteome</keyword>
<protein>
    <recommendedName>
        <fullName evidence="1">N-acetyl-gamma-glutamyl-phosphate reductase</fullName>
        <shortName evidence="1">AGPR</shortName>
        <ecNumber evidence="1">1.2.1.38</ecNumber>
    </recommendedName>
    <alternativeName>
        <fullName evidence="1">N-acetyl-glutamate semialdehyde dehydrogenase</fullName>
        <shortName evidence="1">NAGSA dehydrogenase</shortName>
    </alternativeName>
</protein>
<organism>
    <name type="scientific">Symbiobacterium thermophilum (strain DSM 24528 / JCM 14929 / IAM 14863 / T)</name>
    <dbReference type="NCBI Taxonomy" id="292459"/>
    <lineage>
        <taxon>Bacteria</taxon>
        <taxon>Bacillati</taxon>
        <taxon>Bacillota</taxon>
        <taxon>Clostridia</taxon>
        <taxon>Eubacteriales</taxon>
        <taxon>Symbiobacteriaceae</taxon>
        <taxon>Symbiobacterium</taxon>
    </lineage>
</organism>
<name>ARGC_SYMTH</name>
<sequence>MTIRVGIAGATGYTGVELVRLLAQHPEAEVVVAGTESYQGQHLAAVYPHLRERVDLVGREASPEALAGCDVVFTSLPHGLTMALAPAVLAAGGRLIDLGADFRLRDVTAYEQWYRKTHTAPDLMEEAVYGLPELYRERIRGARLVGNPGCYPTACALAAAPLLQAGVVETEGIIFDAKSGVSGAGRGVNLGVHFSEVNENFKAYNIAGTHRHTPEIEQTLSDLAGRPVVVSFTPHLVPMTRGILATGYFTLKAERTTEQLVDLFREFYAGEPFVRVRPAGELPTTKQVWGSNYCDIGLQVDPRTRRVLVISVIDNLVKGAAGQAIQNMNLLFGLPETTGLLNAGPVYP</sequence>
<dbReference type="EC" id="1.2.1.38" evidence="1"/>
<dbReference type="EMBL" id="AP006840">
    <property type="protein sequence ID" value="BAD41875.1"/>
    <property type="molecule type" value="Genomic_DNA"/>
</dbReference>
<dbReference type="RefSeq" id="WP_011197009.1">
    <property type="nucleotide sequence ID" value="NC_006177.1"/>
</dbReference>
<dbReference type="SMR" id="Q67KC3"/>
<dbReference type="STRING" id="292459.STH2892"/>
<dbReference type="KEGG" id="sth:STH2892"/>
<dbReference type="eggNOG" id="COG0002">
    <property type="taxonomic scope" value="Bacteria"/>
</dbReference>
<dbReference type="HOGENOM" id="CLU_006384_0_1_9"/>
<dbReference type="OrthoDB" id="9801289at2"/>
<dbReference type="UniPathway" id="UPA00068">
    <property type="reaction ID" value="UER00108"/>
</dbReference>
<dbReference type="Proteomes" id="UP000000417">
    <property type="component" value="Chromosome"/>
</dbReference>
<dbReference type="GO" id="GO:0005737">
    <property type="term" value="C:cytoplasm"/>
    <property type="evidence" value="ECO:0007669"/>
    <property type="project" value="UniProtKB-SubCell"/>
</dbReference>
<dbReference type="GO" id="GO:0003942">
    <property type="term" value="F:N-acetyl-gamma-glutamyl-phosphate reductase activity"/>
    <property type="evidence" value="ECO:0007669"/>
    <property type="project" value="UniProtKB-UniRule"/>
</dbReference>
<dbReference type="GO" id="GO:0051287">
    <property type="term" value="F:NAD binding"/>
    <property type="evidence" value="ECO:0007669"/>
    <property type="project" value="InterPro"/>
</dbReference>
<dbReference type="GO" id="GO:0070401">
    <property type="term" value="F:NADP+ binding"/>
    <property type="evidence" value="ECO:0007669"/>
    <property type="project" value="InterPro"/>
</dbReference>
<dbReference type="GO" id="GO:0006526">
    <property type="term" value="P:L-arginine biosynthetic process"/>
    <property type="evidence" value="ECO:0007669"/>
    <property type="project" value="UniProtKB-UniRule"/>
</dbReference>
<dbReference type="CDD" id="cd23934">
    <property type="entry name" value="AGPR_1_C"/>
    <property type="match status" value="1"/>
</dbReference>
<dbReference type="CDD" id="cd17895">
    <property type="entry name" value="AGPR_1_N"/>
    <property type="match status" value="1"/>
</dbReference>
<dbReference type="FunFam" id="3.30.360.10:FF:000014">
    <property type="entry name" value="N-acetyl-gamma-glutamyl-phosphate reductase"/>
    <property type="match status" value="1"/>
</dbReference>
<dbReference type="Gene3D" id="3.30.360.10">
    <property type="entry name" value="Dihydrodipicolinate Reductase, domain 2"/>
    <property type="match status" value="1"/>
</dbReference>
<dbReference type="Gene3D" id="3.40.50.720">
    <property type="entry name" value="NAD(P)-binding Rossmann-like Domain"/>
    <property type="match status" value="1"/>
</dbReference>
<dbReference type="HAMAP" id="MF_00150">
    <property type="entry name" value="ArgC_type1"/>
    <property type="match status" value="1"/>
</dbReference>
<dbReference type="InterPro" id="IPR023013">
    <property type="entry name" value="AGPR_AS"/>
</dbReference>
<dbReference type="InterPro" id="IPR000706">
    <property type="entry name" value="AGPR_type-1"/>
</dbReference>
<dbReference type="InterPro" id="IPR036291">
    <property type="entry name" value="NAD(P)-bd_dom_sf"/>
</dbReference>
<dbReference type="InterPro" id="IPR050085">
    <property type="entry name" value="NAGSA_dehydrogenase"/>
</dbReference>
<dbReference type="InterPro" id="IPR000534">
    <property type="entry name" value="Semialdehyde_DH_NAD-bd"/>
</dbReference>
<dbReference type="NCBIfam" id="TIGR01850">
    <property type="entry name" value="argC"/>
    <property type="match status" value="1"/>
</dbReference>
<dbReference type="PANTHER" id="PTHR32338:SF10">
    <property type="entry name" value="N-ACETYL-GAMMA-GLUTAMYL-PHOSPHATE REDUCTASE, CHLOROPLASTIC-RELATED"/>
    <property type="match status" value="1"/>
</dbReference>
<dbReference type="PANTHER" id="PTHR32338">
    <property type="entry name" value="N-ACETYL-GAMMA-GLUTAMYL-PHOSPHATE REDUCTASE, CHLOROPLASTIC-RELATED-RELATED"/>
    <property type="match status" value="1"/>
</dbReference>
<dbReference type="Pfam" id="PF01118">
    <property type="entry name" value="Semialdhyde_dh"/>
    <property type="match status" value="1"/>
</dbReference>
<dbReference type="Pfam" id="PF22698">
    <property type="entry name" value="Semialdhyde_dhC_1"/>
    <property type="match status" value="1"/>
</dbReference>
<dbReference type="SMART" id="SM00859">
    <property type="entry name" value="Semialdhyde_dh"/>
    <property type="match status" value="1"/>
</dbReference>
<dbReference type="SUPFAM" id="SSF55347">
    <property type="entry name" value="Glyceraldehyde-3-phosphate dehydrogenase-like, C-terminal domain"/>
    <property type="match status" value="1"/>
</dbReference>
<dbReference type="SUPFAM" id="SSF51735">
    <property type="entry name" value="NAD(P)-binding Rossmann-fold domains"/>
    <property type="match status" value="1"/>
</dbReference>
<dbReference type="PROSITE" id="PS01224">
    <property type="entry name" value="ARGC"/>
    <property type="match status" value="1"/>
</dbReference>
<gene>
    <name evidence="1" type="primary">argC</name>
    <name type="ordered locus">STH2892</name>
</gene>
<evidence type="ECO:0000255" key="1">
    <source>
        <dbReference type="HAMAP-Rule" id="MF_00150"/>
    </source>
</evidence>
<accession>Q67KC3</accession>
<reference key="1">
    <citation type="journal article" date="2004" name="Nucleic Acids Res.">
        <title>Genome sequence of Symbiobacterium thermophilum, an uncultivable bacterium that depends on microbial commensalism.</title>
        <authorList>
            <person name="Ueda K."/>
            <person name="Yamashita A."/>
            <person name="Ishikawa J."/>
            <person name="Shimada M."/>
            <person name="Watsuji T."/>
            <person name="Morimura K."/>
            <person name="Ikeda H."/>
            <person name="Hattori M."/>
            <person name="Beppu T."/>
        </authorList>
    </citation>
    <scope>NUCLEOTIDE SEQUENCE [LARGE SCALE GENOMIC DNA]</scope>
    <source>
        <strain>DSM 24528 / JCM 14929 / IAM 14863 / T</strain>
    </source>
</reference>
<feature type="chain" id="PRO_1000011071" description="N-acetyl-gamma-glutamyl-phosphate reductase">
    <location>
        <begin position="1"/>
        <end position="348"/>
    </location>
</feature>
<feature type="active site" evidence="1">
    <location>
        <position position="150"/>
    </location>
</feature>